<comment type="function">
    <text evidence="1">Binds directly to 23S ribosomal RNA and is necessary for the in vitro assembly process of the 50S ribosomal subunit. It is not involved in the protein synthesizing functions of that subunit.</text>
</comment>
<comment type="similarity">
    <text evidence="1">Belongs to the bacterial ribosomal protein bL20 family.</text>
</comment>
<proteinExistence type="inferred from homology"/>
<dbReference type="EMBL" id="CU458896">
    <property type="protein sequence ID" value="CAM62404.1"/>
    <property type="molecule type" value="Genomic_DNA"/>
</dbReference>
<dbReference type="RefSeq" id="WP_005058700.1">
    <property type="nucleotide sequence ID" value="NZ_MLCG01000006.1"/>
</dbReference>
<dbReference type="SMR" id="B1MAY3"/>
<dbReference type="GeneID" id="93379260"/>
<dbReference type="KEGG" id="mab:MAB_2323"/>
<dbReference type="Proteomes" id="UP000007137">
    <property type="component" value="Chromosome"/>
</dbReference>
<dbReference type="GO" id="GO:1990904">
    <property type="term" value="C:ribonucleoprotein complex"/>
    <property type="evidence" value="ECO:0007669"/>
    <property type="project" value="UniProtKB-KW"/>
</dbReference>
<dbReference type="GO" id="GO:0005840">
    <property type="term" value="C:ribosome"/>
    <property type="evidence" value="ECO:0007669"/>
    <property type="project" value="UniProtKB-KW"/>
</dbReference>
<dbReference type="GO" id="GO:0019843">
    <property type="term" value="F:rRNA binding"/>
    <property type="evidence" value="ECO:0007669"/>
    <property type="project" value="UniProtKB-UniRule"/>
</dbReference>
<dbReference type="GO" id="GO:0003735">
    <property type="term" value="F:structural constituent of ribosome"/>
    <property type="evidence" value="ECO:0007669"/>
    <property type="project" value="InterPro"/>
</dbReference>
<dbReference type="GO" id="GO:0000027">
    <property type="term" value="P:ribosomal large subunit assembly"/>
    <property type="evidence" value="ECO:0007669"/>
    <property type="project" value="UniProtKB-UniRule"/>
</dbReference>
<dbReference type="GO" id="GO:0006412">
    <property type="term" value="P:translation"/>
    <property type="evidence" value="ECO:0007669"/>
    <property type="project" value="InterPro"/>
</dbReference>
<dbReference type="CDD" id="cd07026">
    <property type="entry name" value="Ribosomal_L20"/>
    <property type="match status" value="1"/>
</dbReference>
<dbReference type="FunFam" id="1.10.1900.20:FF:000001">
    <property type="entry name" value="50S ribosomal protein L20"/>
    <property type="match status" value="1"/>
</dbReference>
<dbReference type="Gene3D" id="6.10.160.10">
    <property type="match status" value="1"/>
</dbReference>
<dbReference type="Gene3D" id="1.10.1900.20">
    <property type="entry name" value="Ribosomal protein L20"/>
    <property type="match status" value="1"/>
</dbReference>
<dbReference type="HAMAP" id="MF_00382">
    <property type="entry name" value="Ribosomal_bL20"/>
    <property type="match status" value="1"/>
</dbReference>
<dbReference type="InterPro" id="IPR005813">
    <property type="entry name" value="Ribosomal_bL20"/>
</dbReference>
<dbReference type="InterPro" id="IPR049946">
    <property type="entry name" value="RIBOSOMAL_L20_CS"/>
</dbReference>
<dbReference type="InterPro" id="IPR035566">
    <property type="entry name" value="Ribosomal_protein_bL20_C"/>
</dbReference>
<dbReference type="NCBIfam" id="TIGR01032">
    <property type="entry name" value="rplT_bact"/>
    <property type="match status" value="1"/>
</dbReference>
<dbReference type="PANTHER" id="PTHR10986">
    <property type="entry name" value="39S RIBOSOMAL PROTEIN L20"/>
    <property type="match status" value="1"/>
</dbReference>
<dbReference type="Pfam" id="PF00453">
    <property type="entry name" value="Ribosomal_L20"/>
    <property type="match status" value="1"/>
</dbReference>
<dbReference type="PRINTS" id="PR00062">
    <property type="entry name" value="RIBOSOMALL20"/>
</dbReference>
<dbReference type="SUPFAM" id="SSF74731">
    <property type="entry name" value="Ribosomal protein L20"/>
    <property type="match status" value="1"/>
</dbReference>
<dbReference type="PROSITE" id="PS00937">
    <property type="entry name" value="RIBOSOMAL_L20"/>
    <property type="match status" value="1"/>
</dbReference>
<name>RL20_MYCA9</name>
<sequence>MARVKRAVNAQKKRRTILKASKGYRGQRSRLYRKAKEQQLHSLTYAYRDRRARKGEFRKLWIARINAAARANDITYNRFIQGLKIAGVEVDRKNLAELAVSDAAAFTALVEVAKAALPEDVNAPAGEAA</sequence>
<organism>
    <name type="scientific">Mycobacteroides abscessus (strain ATCC 19977 / DSM 44196 / CCUG 20993 / CIP 104536 / JCM 13569 / NCTC 13031 / TMC 1543 / L948)</name>
    <name type="common">Mycobacterium abscessus</name>
    <dbReference type="NCBI Taxonomy" id="561007"/>
    <lineage>
        <taxon>Bacteria</taxon>
        <taxon>Bacillati</taxon>
        <taxon>Actinomycetota</taxon>
        <taxon>Actinomycetes</taxon>
        <taxon>Mycobacteriales</taxon>
        <taxon>Mycobacteriaceae</taxon>
        <taxon>Mycobacteroides</taxon>
        <taxon>Mycobacteroides abscessus</taxon>
    </lineage>
</organism>
<gene>
    <name evidence="1" type="primary">rplT</name>
    <name type="ordered locus">MAB_2323</name>
</gene>
<protein>
    <recommendedName>
        <fullName evidence="1">Large ribosomal subunit protein bL20</fullName>
    </recommendedName>
    <alternativeName>
        <fullName evidence="2">50S ribosomal protein L20</fullName>
    </alternativeName>
</protein>
<accession>B1MAY3</accession>
<reference key="1">
    <citation type="journal article" date="2009" name="PLoS ONE">
        <title>Non mycobacterial virulence genes in the genome of the emerging pathogen Mycobacterium abscessus.</title>
        <authorList>
            <person name="Ripoll F."/>
            <person name="Pasek S."/>
            <person name="Schenowitz C."/>
            <person name="Dossat C."/>
            <person name="Barbe V."/>
            <person name="Rottman M."/>
            <person name="Macheras E."/>
            <person name="Heym B."/>
            <person name="Herrmann J.L."/>
            <person name="Daffe M."/>
            <person name="Brosch R."/>
            <person name="Risler J.L."/>
            <person name="Gaillard J.L."/>
        </authorList>
    </citation>
    <scope>NUCLEOTIDE SEQUENCE [LARGE SCALE GENOMIC DNA]</scope>
    <source>
        <strain>ATCC 19977 / DSM 44196 / CCUG 20993 / CIP 104536 / JCM 13569 / NCTC 13031 / TMC 1543 / L948</strain>
    </source>
</reference>
<feature type="chain" id="PRO_1000122341" description="Large ribosomal subunit protein bL20">
    <location>
        <begin position="1"/>
        <end position="129"/>
    </location>
</feature>
<keyword id="KW-1185">Reference proteome</keyword>
<keyword id="KW-0687">Ribonucleoprotein</keyword>
<keyword id="KW-0689">Ribosomal protein</keyword>
<keyword id="KW-0694">RNA-binding</keyword>
<keyword id="KW-0699">rRNA-binding</keyword>
<evidence type="ECO:0000255" key="1">
    <source>
        <dbReference type="HAMAP-Rule" id="MF_00382"/>
    </source>
</evidence>
<evidence type="ECO:0000305" key="2"/>